<organism>
    <name type="scientific">Oceanobacillus iheyensis (strain DSM 14371 / CIP 107618 / JCM 11309 / KCTC 3954 / HTE831)</name>
    <dbReference type="NCBI Taxonomy" id="221109"/>
    <lineage>
        <taxon>Bacteria</taxon>
        <taxon>Bacillati</taxon>
        <taxon>Bacillota</taxon>
        <taxon>Bacilli</taxon>
        <taxon>Bacillales</taxon>
        <taxon>Bacillaceae</taxon>
        <taxon>Oceanobacillus</taxon>
    </lineage>
</organism>
<gene>
    <name type="ordered locus">OB0297</name>
</gene>
<keyword id="KW-0227">DNA damage</keyword>
<keyword id="KW-0234">DNA repair</keyword>
<keyword id="KW-0378">Hydrolase</keyword>
<keyword id="KW-1185">Reference proteome</keyword>
<dbReference type="EC" id="3.2.2.-" evidence="1"/>
<dbReference type="EMBL" id="BA000028">
    <property type="protein sequence ID" value="BAC12253.1"/>
    <property type="molecule type" value="Genomic_DNA"/>
</dbReference>
<dbReference type="RefSeq" id="WP_011064699.1">
    <property type="nucleotide sequence ID" value="NC_004193.1"/>
</dbReference>
<dbReference type="SMR" id="Q8ETG4"/>
<dbReference type="STRING" id="221109.gene:10732500"/>
<dbReference type="KEGG" id="oih:OB0297"/>
<dbReference type="eggNOG" id="COG2094">
    <property type="taxonomic scope" value="Bacteria"/>
</dbReference>
<dbReference type="HOGENOM" id="CLU_060471_2_0_9"/>
<dbReference type="OrthoDB" id="9794313at2"/>
<dbReference type="PhylomeDB" id="Q8ETG4"/>
<dbReference type="Proteomes" id="UP000000822">
    <property type="component" value="Chromosome"/>
</dbReference>
<dbReference type="GO" id="GO:0003905">
    <property type="term" value="F:alkylbase DNA N-glycosylase activity"/>
    <property type="evidence" value="ECO:0007669"/>
    <property type="project" value="InterPro"/>
</dbReference>
<dbReference type="GO" id="GO:0003677">
    <property type="term" value="F:DNA binding"/>
    <property type="evidence" value="ECO:0007669"/>
    <property type="project" value="InterPro"/>
</dbReference>
<dbReference type="GO" id="GO:0006284">
    <property type="term" value="P:base-excision repair"/>
    <property type="evidence" value="ECO:0007669"/>
    <property type="project" value="InterPro"/>
</dbReference>
<dbReference type="CDD" id="cd00540">
    <property type="entry name" value="AAG"/>
    <property type="match status" value="1"/>
</dbReference>
<dbReference type="FunFam" id="3.10.300.10:FF:000001">
    <property type="entry name" value="Putative 3-methyladenine DNA glycosylase"/>
    <property type="match status" value="1"/>
</dbReference>
<dbReference type="Gene3D" id="3.10.300.10">
    <property type="entry name" value="Methylpurine-DNA glycosylase (MPG)"/>
    <property type="match status" value="1"/>
</dbReference>
<dbReference type="HAMAP" id="MF_00527">
    <property type="entry name" value="3MGH"/>
    <property type="match status" value="1"/>
</dbReference>
<dbReference type="InterPro" id="IPR011034">
    <property type="entry name" value="Formyl_transferase-like_C_sf"/>
</dbReference>
<dbReference type="InterPro" id="IPR003180">
    <property type="entry name" value="MPG"/>
</dbReference>
<dbReference type="InterPro" id="IPR036995">
    <property type="entry name" value="MPG_sf"/>
</dbReference>
<dbReference type="NCBIfam" id="TIGR00567">
    <property type="entry name" value="3mg"/>
    <property type="match status" value="1"/>
</dbReference>
<dbReference type="NCBIfam" id="NF002002">
    <property type="entry name" value="PRK00802.1-2"/>
    <property type="match status" value="1"/>
</dbReference>
<dbReference type="PANTHER" id="PTHR10429">
    <property type="entry name" value="DNA-3-METHYLADENINE GLYCOSYLASE"/>
    <property type="match status" value="1"/>
</dbReference>
<dbReference type="PANTHER" id="PTHR10429:SF0">
    <property type="entry name" value="DNA-3-METHYLADENINE GLYCOSYLASE"/>
    <property type="match status" value="1"/>
</dbReference>
<dbReference type="Pfam" id="PF02245">
    <property type="entry name" value="Pur_DNA_glyco"/>
    <property type="match status" value="1"/>
</dbReference>
<dbReference type="SUPFAM" id="SSF50486">
    <property type="entry name" value="FMT C-terminal domain-like"/>
    <property type="match status" value="1"/>
</dbReference>
<evidence type="ECO:0000255" key="1">
    <source>
        <dbReference type="HAMAP-Rule" id="MF_00527"/>
    </source>
</evidence>
<feature type="chain" id="PRO_0000100096" description="Putative 3-methyladenine DNA glycosylase">
    <location>
        <begin position="1"/>
        <end position="198"/>
    </location>
</feature>
<proteinExistence type="inferred from homology"/>
<accession>Q8ETG4</accession>
<comment type="similarity">
    <text evidence="1">Belongs to the DNA glycosylase MPG family.</text>
</comment>
<protein>
    <recommendedName>
        <fullName evidence="1">Putative 3-methyladenine DNA glycosylase</fullName>
        <ecNumber evidence="1">3.2.2.-</ecNumber>
    </recommendedName>
</protein>
<sequence>MDQQQNFQPLAESFYQVPTLELAKNLLGCILVKQTEEGTSSGVIVETEAYLGNTDRAAHGYGNRRTKRTEILYSKPGYAYVHLIHNHRLINVVSSMEGDPESVLIRAVEPFSGIDEMLMRRPVKKFQNLTSGPGKLTQAMGIYMEDYGHFMLAPPLFISEGKSPASVKTGSRIGIDNTGEAKDYPYRFWVDGNPFVSR</sequence>
<reference key="1">
    <citation type="journal article" date="2002" name="Nucleic Acids Res.">
        <title>Genome sequence of Oceanobacillus iheyensis isolated from the Iheya Ridge and its unexpected adaptive capabilities to extreme environments.</title>
        <authorList>
            <person name="Takami H."/>
            <person name="Takaki Y."/>
            <person name="Uchiyama I."/>
        </authorList>
    </citation>
    <scope>NUCLEOTIDE SEQUENCE [LARGE SCALE GENOMIC DNA]</scope>
    <source>
        <strain>DSM 14371 / CIP 107618 / JCM 11309 / KCTC 3954 / HTE831</strain>
    </source>
</reference>
<name>3MGH_OCEIH</name>